<organism>
    <name type="scientific">Hoplocephalus stephensii</name>
    <name type="common">Stephens's banded snake</name>
    <dbReference type="NCBI Taxonomy" id="196418"/>
    <lineage>
        <taxon>Eukaryota</taxon>
        <taxon>Metazoa</taxon>
        <taxon>Chordata</taxon>
        <taxon>Craniata</taxon>
        <taxon>Vertebrata</taxon>
        <taxon>Euteleostomi</taxon>
        <taxon>Lepidosauria</taxon>
        <taxon>Squamata</taxon>
        <taxon>Bifurcata</taxon>
        <taxon>Unidentata</taxon>
        <taxon>Episquamata</taxon>
        <taxon>Toxicofera</taxon>
        <taxon>Serpentes</taxon>
        <taxon>Colubroidea</taxon>
        <taxon>Elapidae</taxon>
        <taxon>Notechinae</taxon>
        <taxon>Hoplocephalus</taxon>
    </lineage>
</organism>
<sequence length="156" mass="17767">MAATLTPEQITEYKGIFEMFDEEGNGLVKTDDLESLMSLIGINPTKRDLANMAKDVDKDKKGTFNCDGFLVLMGIYHEKSKNQDEELRAAFKVFDKEHKGYIEWDTLKYVLMNAGEPLNEHEAELMMKEADKDGDGTIDYEEFVAMMTGESFKLTQ</sequence>
<protein>
    <recommendedName>
        <fullName>Calglandulin</fullName>
    </recommendedName>
</protein>
<name>CALGL_HOPST</name>
<feature type="chain" id="PRO_0000073550" description="Calglandulin">
    <location>
        <begin position="1"/>
        <end position="156"/>
    </location>
</feature>
<feature type="domain" description="EF-hand 1" evidence="2">
    <location>
        <begin position="8"/>
        <end position="43"/>
    </location>
</feature>
<feature type="domain" description="EF-hand 2" evidence="2">
    <location>
        <begin position="44"/>
        <end position="79"/>
    </location>
</feature>
<feature type="domain" description="EF-hand 3" evidence="2">
    <location>
        <begin position="82"/>
        <end position="117"/>
    </location>
</feature>
<feature type="domain" description="EF-hand 4" evidence="2">
    <location>
        <begin position="118"/>
        <end position="153"/>
    </location>
</feature>
<feature type="binding site" evidence="2">
    <location>
        <position position="131"/>
    </location>
    <ligand>
        <name>Ca(2+)</name>
        <dbReference type="ChEBI" id="CHEBI:29108"/>
    </ligand>
</feature>
<feature type="binding site" evidence="2">
    <location>
        <position position="133"/>
    </location>
    <ligand>
        <name>Ca(2+)</name>
        <dbReference type="ChEBI" id="CHEBI:29108"/>
    </ligand>
</feature>
<feature type="binding site" evidence="2">
    <location>
        <position position="135"/>
    </location>
    <ligand>
        <name>Ca(2+)</name>
        <dbReference type="ChEBI" id="CHEBI:29108"/>
    </ligand>
</feature>
<feature type="binding site" evidence="2">
    <location>
        <position position="137"/>
    </location>
    <ligand>
        <name>Ca(2+)</name>
        <dbReference type="ChEBI" id="CHEBI:29108"/>
    </ligand>
</feature>
<feature type="binding site" evidence="2">
    <location>
        <position position="142"/>
    </location>
    <ligand>
        <name>Ca(2+)</name>
        <dbReference type="ChEBI" id="CHEBI:29108"/>
    </ligand>
</feature>
<accession>Q3SB10</accession>
<reference key="1">
    <citation type="journal article" date="2005" name="Cell. Mol. Life Sci.">
        <title>Identification and analysis of venom gland-specific genes from the coastal taipan (Oxyuranus scutellatus) and related species.</title>
        <authorList>
            <person name="St Pierre L."/>
            <person name="Woods R."/>
            <person name="Earl S.T.H."/>
            <person name="Masci P.P."/>
            <person name="Lavin M.F."/>
        </authorList>
    </citation>
    <scope>NUCLEOTIDE SEQUENCE [MRNA]</scope>
    <source>
        <tissue>Venom gland</tissue>
    </source>
</reference>
<dbReference type="EMBL" id="DQ084032">
    <property type="protein sequence ID" value="AAZ38977.1"/>
    <property type="molecule type" value="mRNA"/>
</dbReference>
<dbReference type="SMR" id="Q3SB10"/>
<dbReference type="GO" id="GO:0005737">
    <property type="term" value="C:cytoplasm"/>
    <property type="evidence" value="ECO:0007669"/>
    <property type="project" value="UniProtKB-SubCell"/>
</dbReference>
<dbReference type="GO" id="GO:0016460">
    <property type="term" value="C:myosin II complex"/>
    <property type="evidence" value="ECO:0007669"/>
    <property type="project" value="TreeGrafter"/>
</dbReference>
<dbReference type="GO" id="GO:0005509">
    <property type="term" value="F:calcium ion binding"/>
    <property type="evidence" value="ECO:0007669"/>
    <property type="project" value="InterPro"/>
</dbReference>
<dbReference type="CDD" id="cd00051">
    <property type="entry name" value="EFh"/>
    <property type="match status" value="1"/>
</dbReference>
<dbReference type="FunFam" id="1.10.238.10:FF:000163">
    <property type="entry name" value="Calmodulin like 6"/>
    <property type="match status" value="1"/>
</dbReference>
<dbReference type="Gene3D" id="1.10.238.10">
    <property type="entry name" value="EF-hand"/>
    <property type="match status" value="2"/>
</dbReference>
<dbReference type="InterPro" id="IPR050230">
    <property type="entry name" value="CALM/Myosin/TropC-like"/>
</dbReference>
<dbReference type="InterPro" id="IPR011992">
    <property type="entry name" value="EF-hand-dom_pair"/>
</dbReference>
<dbReference type="InterPro" id="IPR018247">
    <property type="entry name" value="EF_Hand_1_Ca_BS"/>
</dbReference>
<dbReference type="InterPro" id="IPR002048">
    <property type="entry name" value="EF_hand_dom"/>
</dbReference>
<dbReference type="PANTHER" id="PTHR23048:SF56">
    <property type="entry name" value="CALMODULIN 2"/>
    <property type="match status" value="1"/>
</dbReference>
<dbReference type="PANTHER" id="PTHR23048">
    <property type="entry name" value="MYOSIN LIGHT CHAIN 1, 3"/>
    <property type="match status" value="1"/>
</dbReference>
<dbReference type="Pfam" id="PF13499">
    <property type="entry name" value="EF-hand_7"/>
    <property type="match status" value="1"/>
</dbReference>
<dbReference type="Pfam" id="PF13833">
    <property type="entry name" value="EF-hand_8"/>
    <property type="match status" value="1"/>
</dbReference>
<dbReference type="SMART" id="SM00054">
    <property type="entry name" value="EFh"/>
    <property type="match status" value="4"/>
</dbReference>
<dbReference type="SUPFAM" id="SSF47473">
    <property type="entry name" value="EF-hand"/>
    <property type="match status" value="1"/>
</dbReference>
<dbReference type="PROSITE" id="PS00018">
    <property type="entry name" value="EF_HAND_1"/>
    <property type="match status" value="1"/>
</dbReference>
<dbReference type="PROSITE" id="PS50222">
    <property type="entry name" value="EF_HAND_2"/>
    <property type="match status" value="4"/>
</dbReference>
<evidence type="ECO:0000250" key="1"/>
<evidence type="ECO:0000255" key="2">
    <source>
        <dbReference type="PROSITE-ProRule" id="PRU00448"/>
    </source>
</evidence>
<evidence type="ECO:0000305" key="3"/>
<keyword id="KW-0106">Calcium</keyword>
<keyword id="KW-0963">Cytoplasm</keyword>
<keyword id="KW-0479">Metal-binding</keyword>
<keyword id="KW-0677">Repeat</keyword>
<comment type="function">
    <text evidence="1">May be involved in the cellular control mechanism of the secretion of toxins from the gland into the venom.</text>
</comment>
<comment type="subcellular location">
    <subcellularLocation>
        <location evidence="3">Cytoplasm</location>
    </subcellularLocation>
    <text evidence="1">Not found in venom.</text>
</comment>
<comment type="tissue specificity">
    <text>Expressed by the venom gland.</text>
</comment>
<comment type="similarity">
    <text evidence="3">Belongs to the calmodulin family. Calglandulin subfamily.</text>
</comment>
<proteinExistence type="evidence at transcript level"/>